<comment type="function">
    <text evidence="1">This enzyme is involved in nucleotide metabolism: it produces dUMP, the immediate precursor of thymidine nucleotides and it decreases the intracellular concentration of dUTP so that uracil cannot be incorporated into DNA.</text>
</comment>
<comment type="catalytic activity">
    <reaction evidence="1">
        <text>dUTP + H2O = dUMP + diphosphate + H(+)</text>
        <dbReference type="Rhea" id="RHEA:10248"/>
        <dbReference type="ChEBI" id="CHEBI:15377"/>
        <dbReference type="ChEBI" id="CHEBI:15378"/>
        <dbReference type="ChEBI" id="CHEBI:33019"/>
        <dbReference type="ChEBI" id="CHEBI:61555"/>
        <dbReference type="ChEBI" id="CHEBI:246422"/>
        <dbReference type="EC" id="3.6.1.23"/>
    </reaction>
</comment>
<comment type="cofactor">
    <cofactor evidence="1">
        <name>Mg(2+)</name>
        <dbReference type="ChEBI" id="CHEBI:18420"/>
    </cofactor>
</comment>
<comment type="pathway">
    <text evidence="1">Pyrimidine metabolism; dUMP biosynthesis; dUMP from dCTP (dUTP route): step 2/2.</text>
</comment>
<comment type="similarity">
    <text evidence="1">Belongs to the dUTPase family.</text>
</comment>
<comment type="sequence caution" evidence="2">
    <conflict type="erroneous initiation">
        <sequence resource="EMBL-CDS" id="BAC89406"/>
    </conflict>
</comment>
<feature type="chain" id="PRO_0000182865" description="Deoxyuridine 5'-triphosphate nucleotidohydrolase">
    <location>
        <begin position="1"/>
        <end position="147"/>
    </location>
</feature>
<feature type="binding site" evidence="1">
    <location>
        <begin position="67"/>
        <end position="69"/>
    </location>
    <ligand>
        <name>substrate</name>
    </ligand>
</feature>
<feature type="binding site" evidence="1">
    <location>
        <position position="80"/>
    </location>
    <ligand>
        <name>substrate</name>
    </ligand>
</feature>
<feature type="binding site" evidence="1">
    <location>
        <begin position="84"/>
        <end position="86"/>
    </location>
    <ligand>
        <name>substrate</name>
    </ligand>
</feature>
<evidence type="ECO:0000255" key="1">
    <source>
        <dbReference type="HAMAP-Rule" id="MF_00116"/>
    </source>
</evidence>
<evidence type="ECO:0000305" key="2"/>
<keyword id="KW-0378">Hydrolase</keyword>
<keyword id="KW-0460">Magnesium</keyword>
<keyword id="KW-0479">Metal-binding</keyword>
<keyword id="KW-0546">Nucleotide metabolism</keyword>
<keyword id="KW-1185">Reference proteome</keyword>
<proteinExistence type="inferred from homology"/>
<accession>Q7NKL2</accession>
<dbReference type="EC" id="3.6.1.23" evidence="1"/>
<dbReference type="EMBL" id="BA000045">
    <property type="protein sequence ID" value="BAC89406.1"/>
    <property type="status" value="ALT_INIT"/>
    <property type="molecule type" value="Genomic_DNA"/>
</dbReference>
<dbReference type="RefSeq" id="NP_924411.1">
    <property type="nucleotide sequence ID" value="NC_005125.1"/>
</dbReference>
<dbReference type="RefSeq" id="WP_164928788.1">
    <property type="nucleotide sequence ID" value="NC_005125.1"/>
</dbReference>
<dbReference type="SMR" id="Q7NKL2"/>
<dbReference type="FunCoup" id="Q7NKL2">
    <property type="interactions" value="298"/>
</dbReference>
<dbReference type="STRING" id="251221.gene:10758954"/>
<dbReference type="EnsemblBacteria" id="BAC89406">
    <property type="protein sequence ID" value="BAC89406"/>
    <property type="gene ID" value="BAC89406"/>
</dbReference>
<dbReference type="KEGG" id="gvi:glr1465"/>
<dbReference type="PATRIC" id="fig|251221.4.peg.1497"/>
<dbReference type="eggNOG" id="COG0756">
    <property type="taxonomic scope" value="Bacteria"/>
</dbReference>
<dbReference type="HOGENOM" id="CLU_068508_1_2_3"/>
<dbReference type="InParanoid" id="Q7NKL2"/>
<dbReference type="OrthoDB" id="9809956at2"/>
<dbReference type="PhylomeDB" id="Q7NKL2"/>
<dbReference type="UniPathway" id="UPA00610">
    <property type="reaction ID" value="UER00666"/>
</dbReference>
<dbReference type="Proteomes" id="UP000000557">
    <property type="component" value="Chromosome"/>
</dbReference>
<dbReference type="GO" id="GO:0004170">
    <property type="term" value="F:dUTP diphosphatase activity"/>
    <property type="evidence" value="ECO:0000318"/>
    <property type="project" value="GO_Central"/>
</dbReference>
<dbReference type="GO" id="GO:0000287">
    <property type="term" value="F:magnesium ion binding"/>
    <property type="evidence" value="ECO:0000318"/>
    <property type="project" value="GO_Central"/>
</dbReference>
<dbReference type="GO" id="GO:0006226">
    <property type="term" value="P:dUMP biosynthetic process"/>
    <property type="evidence" value="ECO:0000318"/>
    <property type="project" value="GO_Central"/>
</dbReference>
<dbReference type="GO" id="GO:0046081">
    <property type="term" value="P:dUTP catabolic process"/>
    <property type="evidence" value="ECO:0000318"/>
    <property type="project" value="GO_Central"/>
</dbReference>
<dbReference type="CDD" id="cd07557">
    <property type="entry name" value="trimeric_dUTPase"/>
    <property type="match status" value="1"/>
</dbReference>
<dbReference type="FunFam" id="2.70.40.10:FF:000008">
    <property type="entry name" value="Deoxyuridine 5'-triphosphate nucleotidohydrolase"/>
    <property type="match status" value="1"/>
</dbReference>
<dbReference type="Gene3D" id="2.70.40.10">
    <property type="match status" value="1"/>
</dbReference>
<dbReference type="HAMAP" id="MF_00116">
    <property type="entry name" value="dUTPase_bact"/>
    <property type="match status" value="1"/>
</dbReference>
<dbReference type="InterPro" id="IPR008181">
    <property type="entry name" value="dUTPase"/>
</dbReference>
<dbReference type="InterPro" id="IPR029054">
    <property type="entry name" value="dUTPase-like"/>
</dbReference>
<dbReference type="InterPro" id="IPR036157">
    <property type="entry name" value="dUTPase-like_sf"/>
</dbReference>
<dbReference type="InterPro" id="IPR033704">
    <property type="entry name" value="dUTPase_trimeric"/>
</dbReference>
<dbReference type="NCBIfam" id="TIGR00576">
    <property type="entry name" value="dut"/>
    <property type="match status" value="1"/>
</dbReference>
<dbReference type="NCBIfam" id="NF001862">
    <property type="entry name" value="PRK00601.1"/>
    <property type="match status" value="1"/>
</dbReference>
<dbReference type="PANTHER" id="PTHR11241">
    <property type="entry name" value="DEOXYURIDINE 5'-TRIPHOSPHATE NUCLEOTIDOHYDROLASE"/>
    <property type="match status" value="1"/>
</dbReference>
<dbReference type="PANTHER" id="PTHR11241:SF0">
    <property type="entry name" value="DEOXYURIDINE 5'-TRIPHOSPHATE NUCLEOTIDOHYDROLASE"/>
    <property type="match status" value="1"/>
</dbReference>
<dbReference type="Pfam" id="PF00692">
    <property type="entry name" value="dUTPase"/>
    <property type="match status" value="1"/>
</dbReference>
<dbReference type="SUPFAM" id="SSF51283">
    <property type="entry name" value="dUTPase-like"/>
    <property type="match status" value="1"/>
</dbReference>
<protein>
    <recommendedName>
        <fullName evidence="1">Deoxyuridine 5'-triphosphate nucleotidohydrolase</fullName>
        <shortName evidence="1">dUTPase</shortName>
        <ecNumber evidence="1">3.6.1.23</ecNumber>
    </recommendedName>
    <alternativeName>
        <fullName evidence="1">dUTP pyrophosphatase</fullName>
    </alternativeName>
</protein>
<organism>
    <name type="scientific">Gloeobacter violaceus (strain ATCC 29082 / PCC 7421)</name>
    <dbReference type="NCBI Taxonomy" id="251221"/>
    <lineage>
        <taxon>Bacteria</taxon>
        <taxon>Bacillati</taxon>
        <taxon>Cyanobacteriota</taxon>
        <taxon>Cyanophyceae</taxon>
        <taxon>Gloeobacterales</taxon>
        <taxon>Gloeobacteraceae</taxon>
        <taxon>Gloeobacter</taxon>
    </lineage>
</organism>
<name>DUT_GLOVI</name>
<reference key="1">
    <citation type="journal article" date="2003" name="DNA Res.">
        <title>Complete genome structure of Gloeobacter violaceus PCC 7421, a cyanobacterium that lacks thylakoids.</title>
        <authorList>
            <person name="Nakamura Y."/>
            <person name="Kaneko T."/>
            <person name="Sato S."/>
            <person name="Mimuro M."/>
            <person name="Miyashita H."/>
            <person name="Tsuchiya T."/>
            <person name="Sasamoto S."/>
            <person name="Watanabe A."/>
            <person name="Kawashima K."/>
            <person name="Kishida Y."/>
            <person name="Kiyokawa C."/>
            <person name="Kohara M."/>
            <person name="Matsumoto M."/>
            <person name="Matsuno A."/>
            <person name="Nakazaki N."/>
            <person name="Shimpo S."/>
            <person name="Takeuchi C."/>
            <person name="Yamada M."/>
            <person name="Tabata S."/>
        </authorList>
    </citation>
    <scope>NUCLEOTIDE SEQUENCE [LARGE SCALE GENOMIC DNA]</scope>
    <source>
        <strain>ATCC 29082 / PCC 7421</strain>
    </source>
</reference>
<sequence length="147" mass="15466">MDPVRVAIQRLAHCFALPTCAHPGDAGLDLFAAHAVPLSIAPGRFTRVPTGIALGLPAGYMAFVQPRSGLAARHGISVLNTPGLIDCGYRGEIQVLLINHGEVPVVVSRGDRIAQLVVLPVPQVQFVEVSTLESSERQTGSFGSSGY</sequence>
<gene>
    <name evidence="1" type="primary">dut</name>
    <name type="ordered locus">glr1465</name>
</gene>